<name>AROC_ERYLH</name>
<keyword id="KW-0028">Amino-acid biosynthesis</keyword>
<keyword id="KW-0057">Aromatic amino acid biosynthesis</keyword>
<keyword id="KW-0274">FAD</keyword>
<keyword id="KW-0285">Flavoprotein</keyword>
<keyword id="KW-0288">FMN</keyword>
<keyword id="KW-0456">Lyase</keyword>
<keyword id="KW-0521">NADP</keyword>
<keyword id="KW-1185">Reference proteome</keyword>
<protein>
    <recommendedName>
        <fullName evidence="1">Chorismate synthase</fullName>
        <shortName evidence="1">CS</shortName>
        <ecNumber evidence="1">4.2.3.5</ecNumber>
    </recommendedName>
    <alternativeName>
        <fullName evidence="1">5-enolpyruvylshikimate-3-phosphate phospholyase</fullName>
    </alternativeName>
</protein>
<accession>Q2N810</accession>
<gene>
    <name evidence="1" type="primary">aroC</name>
    <name type="ordered locus">ELI_10445</name>
</gene>
<dbReference type="EC" id="4.2.3.5" evidence="1"/>
<dbReference type="EMBL" id="CP000157">
    <property type="protein sequence ID" value="ABC64181.1"/>
    <property type="molecule type" value="Genomic_DNA"/>
</dbReference>
<dbReference type="RefSeq" id="WP_011415008.1">
    <property type="nucleotide sequence ID" value="NC_007722.1"/>
</dbReference>
<dbReference type="SMR" id="Q2N810"/>
<dbReference type="STRING" id="314225.ELI_10445"/>
<dbReference type="KEGG" id="eli:ELI_10445"/>
<dbReference type="eggNOG" id="COG0082">
    <property type="taxonomic scope" value="Bacteria"/>
</dbReference>
<dbReference type="HOGENOM" id="CLU_034547_0_0_5"/>
<dbReference type="OrthoDB" id="9771806at2"/>
<dbReference type="UniPathway" id="UPA00053">
    <property type="reaction ID" value="UER00090"/>
</dbReference>
<dbReference type="Proteomes" id="UP000008808">
    <property type="component" value="Chromosome"/>
</dbReference>
<dbReference type="GO" id="GO:0005829">
    <property type="term" value="C:cytosol"/>
    <property type="evidence" value="ECO:0007669"/>
    <property type="project" value="TreeGrafter"/>
</dbReference>
<dbReference type="GO" id="GO:0004107">
    <property type="term" value="F:chorismate synthase activity"/>
    <property type="evidence" value="ECO:0007669"/>
    <property type="project" value="UniProtKB-UniRule"/>
</dbReference>
<dbReference type="GO" id="GO:0010181">
    <property type="term" value="F:FMN binding"/>
    <property type="evidence" value="ECO:0007669"/>
    <property type="project" value="TreeGrafter"/>
</dbReference>
<dbReference type="GO" id="GO:0008652">
    <property type="term" value="P:amino acid biosynthetic process"/>
    <property type="evidence" value="ECO:0007669"/>
    <property type="project" value="UniProtKB-KW"/>
</dbReference>
<dbReference type="GO" id="GO:0009073">
    <property type="term" value="P:aromatic amino acid family biosynthetic process"/>
    <property type="evidence" value="ECO:0007669"/>
    <property type="project" value="UniProtKB-KW"/>
</dbReference>
<dbReference type="GO" id="GO:0009423">
    <property type="term" value="P:chorismate biosynthetic process"/>
    <property type="evidence" value="ECO:0007669"/>
    <property type="project" value="UniProtKB-UniRule"/>
</dbReference>
<dbReference type="CDD" id="cd07304">
    <property type="entry name" value="Chorismate_synthase"/>
    <property type="match status" value="1"/>
</dbReference>
<dbReference type="Gene3D" id="3.60.150.10">
    <property type="entry name" value="Chorismate synthase AroC"/>
    <property type="match status" value="1"/>
</dbReference>
<dbReference type="HAMAP" id="MF_00300">
    <property type="entry name" value="Chorismate_synth"/>
    <property type="match status" value="1"/>
</dbReference>
<dbReference type="InterPro" id="IPR000453">
    <property type="entry name" value="Chorismate_synth"/>
</dbReference>
<dbReference type="InterPro" id="IPR035904">
    <property type="entry name" value="Chorismate_synth_AroC_sf"/>
</dbReference>
<dbReference type="InterPro" id="IPR020541">
    <property type="entry name" value="Chorismate_synthase_CS"/>
</dbReference>
<dbReference type="NCBIfam" id="TIGR00033">
    <property type="entry name" value="aroC"/>
    <property type="match status" value="1"/>
</dbReference>
<dbReference type="NCBIfam" id="NF003793">
    <property type="entry name" value="PRK05382.1"/>
    <property type="match status" value="1"/>
</dbReference>
<dbReference type="PANTHER" id="PTHR21085">
    <property type="entry name" value="CHORISMATE SYNTHASE"/>
    <property type="match status" value="1"/>
</dbReference>
<dbReference type="PANTHER" id="PTHR21085:SF0">
    <property type="entry name" value="CHORISMATE SYNTHASE"/>
    <property type="match status" value="1"/>
</dbReference>
<dbReference type="Pfam" id="PF01264">
    <property type="entry name" value="Chorismate_synt"/>
    <property type="match status" value="1"/>
</dbReference>
<dbReference type="PIRSF" id="PIRSF001456">
    <property type="entry name" value="Chorismate_synth"/>
    <property type="match status" value="1"/>
</dbReference>
<dbReference type="SUPFAM" id="SSF103263">
    <property type="entry name" value="Chorismate synthase, AroC"/>
    <property type="match status" value="1"/>
</dbReference>
<dbReference type="PROSITE" id="PS00787">
    <property type="entry name" value="CHORISMATE_SYNTHASE_1"/>
    <property type="match status" value="1"/>
</dbReference>
<dbReference type="PROSITE" id="PS00788">
    <property type="entry name" value="CHORISMATE_SYNTHASE_2"/>
    <property type="match status" value="1"/>
</dbReference>
<dbReference type="PROSITE" id="PS00789">
    <property type="entry name" value="CHORISMATE_SYNTHASE_3"/>
    <property type="match status" value="1"/>
</dbReference>
<reference key="1">
    <citation type="journal article" date="2009" name="J. Bacteriol.">
        <title>Complete genome sequence of Erythrobacter litoralis HTCC2594.</title>
        <authorList>
            <person name="Oh H.M."/>
            <person name="Giovannoni S.J."/>
            <person name="Ferriera S."/>
            <person name="Johnson J."/>
            <person name="Cho J.C."/>
        </authorList>
    </citation>
    <scope>NUCLEOTIDE SEQUENCE [LARGE SCALE GENOMIC DNA]</scope>
    <source>
        <strain>HTCC2594</strain>
    </source>
</reference>
<feature type="chain" id="PRO_1000022486" description="Chorismate synthase">
    <location>
        <begin position="1"/>
        <end position="365"/>
    </location>
</feature>
<feature type="binding site" evidence="1">
    <location>
        <position position="48"/>
    </location>
    <ligand>
        <name>NADP(+)</name>
        <dbReference type="ChEBI" id="CHEBI:58349"/>
    </ligand>
</feature>
<feature type="binding site" evidence="1">
    <location>
        <begin position="130"/>
        <end position="132"/>
    </location>
    <ligand>
        <name>FMN</name>
        <dbReference type="ChEBI" id="CHEBI:58210"/>
    </ligand>
</feature>
<feature type="binding site" evidence="1">
    <location>
        <begin position="242"/>
        <end position="243"/>
    </location>
    <ligand>
        <name>FMN</name>
        <dbReference type="ChEBI" id="CHEBI:58210"/>
    </ligand>
</feature>
<feature type="binding site" evidence="1">
    <location>
        <position position="290"/>
    </location>
    <ligand>
        <name>FMN</name>
        <dbReference type="ChEBI" id="CHEBI:58210"/>
    </ligand>
</feature>
<feature type="binding site" evidence="1">
    <location>
        <begin position="305"/>
        <end position="309"/>
    </location>
    <ligand>
        <name>FMN</name>
        <dbReference type="ChEBI" id="CHEBI:58210"/>
    </ligand>
</feature>
<feature type="binding site" evidence="1">
    <location>
        <position position="331"/>
    </location>
    <ligand>
        <name>FMN</name>
        <dbReference type="ChEBI" id="CHEBI:58210"/>
    </ligand>
</feature>
<organism>
    <name type="scientific">Erythrobacter litoralis (strain HTCC2594)</name>
    <dbReference type="NCBI Taxonomy" id="314225"/>
    <lineage>
        <taxon>Bacteria</taxon>
        <taxon>Pseudomonadati</taxon>
        <taxon>Pseudomonadota</taxon>
        <taxon>Alphaproteobacteria</taxon>
        <taxon>Sphingomonadales</taxon>
        <taxon>Erythrobacteraceae</taxon>
        <taxon>Erythrobacter/Porphyrobacter group</taxon>
        <taxon>Erythrobacter</taxon>
    </lineage>
</organism>
<sequence length="365" mass="38686">MSWNTFGRVLRMTTWGESHGPAIGCVLDGCPPGIALSESDIQPFLDARRPGQNKFTTQRKEPDQVRILSGVFDGQDGVQRTTGTPISLMIENVDQRSKDYSEVAKAYRPGHADYAYDAKYGFRDYRGGGRSSARETAMRVAAGAVARLIIPDVTITGYVREIGGDAIDAARFDSDAIGENPFWCPDADAAKRWETLVDEARKAGSSLGAVVECVAEGVPAGWGAPIYAKLDGDLGGAMMSINAVKGVEIGDGFDAARLSGEQNADPMRPAAEGSDAGPRFEANHAGGISGGISTGQPVTCKVAFKPTSSILTPVETIDTEGNATEIRTKGRHDPCVGIRGTPVVEAMMALVLADHMLLHRAQCGQ</sequence>
<evidence type="ECO:0000255" key="1">
    <source>
        <dbReference type="HAMAP-Rule" id="MF_00300"/>
    </source>
</evidence>
<proteinExistence type="inferred from homology"/>
<comment type="function">
    <text evidence="1">Catalyzes the anti-1,4-elimination of the C-3 phosphate and the C-6 proR hydrogen from 5-enolpyruvylshikimate-3-phosphate (EPSP) to yield chorismate, which is the branch point compound that serves as the starting substrate for the three terminal pathways of aromatic amino acid biosynthesis. This reaction introduces a second double bond into the aromatic ring system.</text>
</comment>
<comment type="catalytic activity">
    <reaction evidence="1">
        <text>5-O-(1-carboxyvinyl)-3-phosphoshikimate = chorismate + phosphate</text>
        <dbReference type="Rhea" id="RHEA:21020"/>
        <dbReference type="ChEBI" id="CHEBI:29748"/>
        <dbReference type="ChEBI" id="CHEBI:43474"/>
        <dbReference type="ChEBI" id="CHEBI:57701"/>
        <dbReference type="EC" id="4.2.3.5"/>
    </reaction>
</comment>
<comment type="cofactor">
    <cofactor evidence="1">
        <name>FMNH2</name>
        <dbReference type="ChEBI" id="CHEBI:57618"/>
    </cofactor>
    <text evidence="1">Reduced FMN (FMNH(2)).</text>
</comment>
<comment type="pathway">
    <text evidence="1">Metabolic intermediate biosynthesis; chorismate biosynthesis; chorismate from D-erythrose 4-phosphate and phosphoenolpyruvate: step 7/7.</text>
</comment>
<comment type="subunit">
    <text evidence="1">Homotetramer.</text>
</comment>
<comment type="similarity">
    <text evidence="1">Belongs to the chorismate synthase family.</text>
</comment>